<dbReference type="EC" id="6.3.5.3" evidence="1"/>
<dbReference type="EC" id="3.5.1.2" evidence="1"/>
<dbReference type="EMBL" id="AE015929">
    <property type="protein sequence ID" value="AAO04363.1"/>
    <property type="molecule type" value="Genomic_DNA"/>
</dbReference>
<dbReference type="RefSeq" id="NP_764321.1">
    <property type="nucleotide sequence ID" value="NC_004461.1"/>
</dbReference>
<dbReference type="RefSeq" id="WP_001831727.1">
    <property type="nucleotide sequence ID" value="NZ_WBME01000028.1"/>
</dbReference>
<dbReference type="SMR" id="Q8CPP0"/>
<dbReference type="GeneID" id="50019094"/>
<dbReference type="KEGG" id="sep:SE_0766"/>
<dbReference type="PATRIC" id="fig|176280.10.peg.738"/>
<dbReference type="eggNOG" id="COG0047">
    <property type="taxonomic scope" value="Bacteria"/>
</dbReference>
<dbReference type="HOGENOM" id="CLU_001031_3_1_9"/>
<dbReference type="OrthoDB" id="9804441at2"/>
<dbReference type="UniPathway" id="UPA00074">
    <property type="reaction ID" value="UER00128"/>
</dbReference>
<dbReference type="Proteomes" id="UP000001411">
    <property type="component" value="Chromosome"/>
</dbReference>
<dbReference type="GO" id="GO:0005737">
    <property type="term" value="C:cytoplasm"/>
    <property type="evidence" value="ECO:0007669"/>
    <property type="project" value="UniProtKB-SubCell"/>
</dbReference>
<dbReference type="GO" id="GO:0005524">
    <property type="term" value="F:ATP binding"/>
    <property type="evidence" value="ECO:0007669"/>
    <property type="project" value="UniProtKB-KW"/>
</dbReference>
<dbReference type="GO" id="GO:0004359">
    <property type="term" value="F:glutaminase activity"/>
    <property type="evidence" value="ECO:0007669"/>
    <property type="project" value="UniProtKB-EC"/>
</dbReference>
<dbReference type="GO" id="GO:0004642">
    <property type="term" value="F:phosphoribosylformylglycinamidine synthase activity"/>
    <property type="evidence" value="ECO:0007669"/>
    <property type="project" value="UniProtKB-UniRule"/>
</dbReference>
<dbReference type="GO" id="GO:0006189">
    <property type="term" value="P:'de novo' IMP biosynthetic process"/>
    <property type="evidence" value="ECO:0007669"/>
    <property type="project" value="UniProtKB-UniRule"/>
</dbReference>
<dbReference type="CDD" id="cd01740">
    <property type="entry name" value="GATase1_FGAR_AT"/>
    <property type="match status" value="1"/>
</dbReference>
<dbReference type="Gene3D" id="3.40.50.880">
    <property type="match status" value="1"/>
</dbReference>
<dbReference type="HAMAP" id="MF_00421">
    <property type="entry name" value="PurQ"/>
    <property type="match status" value="1"/>
</dbReference>
<dbReference type="InterPro" id="IPR029062">
    <property type="entry name" value="Class_I_gatase-like"/>
</dbReference>
<dbReference type="InterPro" id="IPR010075">
    <property type="entry name" value="PRibForGlyAmidine_synth_PurQ"/>
</dbReference>
<dbReference type="NCBIfam" id="TIGR01737">
    <property type="entry name" value="FGAM_synth_I"/>
    <property type="match status" value="1"/>
</dbReference>
<dbReference type="NCBIfam" id="NF002957">
    <property type="entry name" value="PRK03619.1"/>
    <property type="match status" value="1"/>
</dbReference>
<dbReference type="PANTHER" id="PTHR47552">
    <property type="entry name" value="PHOSPHORIBOSYLFORMYLGLYCINAMIDINE SYNTHASE SUBUNIT PURQ"/>
    <property type="match status" value="1"/>
</dbReference>
<dbReference type="PANTHER" id="PTHR47552:SF1">
    <property type="entry name" value="PHOSPHORIBOSYLFORMYLGLYCINAMIDINE SYNTHASE SUBUNIT PURQ"/>
    <property type="match status" value="1"/>
</dbReference>
<dbReference type="Pfam" id="PF13507">
    <property type="entry name" value="GATase_5"/>
    <property type="match status" value="1"/>
</dbReference>
<dbReference type="PIRSF" id="PIRSF001586">
    <property type="entry name" value="FGAM_synth_I"/>
    <property type="match status" value="1"/>
</dbReference>
<dbReference type="SMART" id="SM01211">
    <property type="entry name" value="GATase_5"/>
    <property type="match status" value="1"/>
</dbReference>
<dbReference type="SUPFAM" id="SSF52317">
    <property type="entry name" value="Class I glutamine amidotransferase-like"/>
    <property type="match status" value="1"/>
</dbReference>
<dbReference type="PROSITE" id="PS51273">
    <property type="entry name" value="GATASE_TYPE_1"/>
    <property type="match status" value="1"/>
</dbReference>
<keyword id="KW-0067">ATP-binding</keyword>
<keyword id="KW-0963">Cytoplasm</keyword>
<keyword id="KW-0315">Glutamine amidotransferase</keyword>
<keyword id="KW-0378">Hydrolase</keyword>
<keyword id="KW-0436">Ligase</keyword>
<keyword id="KW-0547">Nucleotide-binding</keyword>
<keyword id="KW-0658">Purine biosynthesis</keyword>
<comment type="function">
    <text evidence="1">Part of the phosphoribosylformylglycinamidine synthase complex involved in the purines biosynthetic pathway. Catalyzes the ATP-dependent conversion of formylglycinamide ribonucleotide (FGAR) and glutamine to yield formylglycinamidine ribonucleotide (FGAM) and glutamate. The FGAM synthase complex is composed of three subunits. PurQ produces an ammonia molecule by converting glutamine to glutamate. PurL transfers the ammonia molecule to FGAR to form FGAM in an ATP-dependent manner. PurS interacts with PurQ and PurL and is thought to assist in the transfer of the ammonia molecule from PurQ to PurL.</text>
</comment>
<comment type="catalytic activity">
    <reaction evidence="1">
        <text>N(2)-formyl-N(1)-(5-phospho-beta-D-ribosyl)glycinamide + L-glutamine + ATP + H2O = 2-formamido-N(1)-(5-O-phospho-beta-D-ribosyl)acetamidine + L-glutamate + ADP + phosphate + H(+)</text>
        <dbReference type="Rhea" id="RHEA:17129"/>
        <dbReference type="ChEBI" id="CHEBI:15377"/>
        <dbReference type="ChEBI" id="CHEBI:15378"/>
        <dbReference type="ChEBI" id="CHEBI:29985"/>
        <dbReference type="ChEBI" id="CHEBI:30616"/>
        <dbReference type="ChEBI" id="CHEBI:43474"/>
        <dbReference type="ChEBI" id="CHEBI:58359"/>
        <dbReference type="ChEBI" id="CHEBI:147286"/>
        <dbReference type="ChEBI" id="CHEBI:147287"/>
        <dbReference type="ChEBI" id="CHEBI:456216"/>
        <dbReference type="EC" id="6.3.5.3"/>
    </reaction>
</comment>
<comment type="catalytic activity">
    <reaction evidence="1">
        <text>L-glutamine + H2O = L-glutamate + NH4(+)</text>
        <dbReference type="Rhea" id="RHEA:15889"/>
        <dbReference type="ChEBI" id="CHEBI:15377"/>
        <dbReference type="ChEBI" id="CHEBI:28938"/>
        <dbReference type="ChEBI" id="CHEBI:29985"/>
        <dbReference type="ChEBI" id="CHEBI:58359"/>
        <dbReference type="EC" id="3.5.1.2"/>
    </reaction>
</comment>
<comment type="pathway">
    <text evidence="1">Purine metabolism; IMP biosynthesis via de novo pathway; 5-amino-1-(5-phospho-D-ribosyl)imidazole from N(2)-formyl-N(1)-(5-phospho-D-ribosyl)glycinamide: step 1/2.</text>
</comment>
<comment type="subunit">
    <text evidence="1">Part of the FGAM synthase complex composed of 1 PurL, 1 PurQ and 2 PurS subunits.</text>
</comment>
<comment type="subcellular location">
    <subcellularLocation>
        <location evidence="1">Cytoplasm</location>
    </subcellularLocation>
</comment>
<name>PURQ_STAES</name>
<proteinExistence type="inferred from homology"/>
<accession>Q8CPP0</accession>
<organism>
    <name type="scientific">Staphylococcus epidermidis (strain ATCC 12228 / FDA PCI 1200)</name>
    <dbReference type="NCBI Taxonomy" id="176280"/>
    <lineage>
        <taxon>Bacteria</taxon>
        <taxon>Bacillati</taxon>
        <taxon>Bacillota</taxon>
        <taxon>Bacilli</taxon>
        <taxon>Bacillales</taxon>
        <taxon>Staphylococcaceae</taxon>
        <taxon>Staphylococcus</taxon>
    </lineage>
</organism>
<evidence type="ECO:0000255" key="1">
    <source>
        <dbReference type="HAMAP-Rule" id="MF_00421"/>
    </source>
</evidence>
<sequence length="223" mass="24733">MKFAVLVFPGSNCDRDMYNAAIKSGVDAAYVDYRETTLDGFDGVLIPGGFSFGDYLRSGAMASVAPIIKEVKRFAKEGKPVLGVCNGFQILTEIGLLPGALLHNDSHLFISRNETLKITNNQTPFTHLYVKNENVVYPVAHGEGHYYCTDEIYRELNDNNQIILKYTNNPNGSYEDIAGIVNKEGNVCGMMPHPERALETLLGTNSGVKLFESMVKSWREQNV</sequence>
<protein>
    <recommendedName>
        <fullName evidence="1">Phosphoribosylformylglycinamidine synthase subunit PurQ</fullName>
        <shortName evidence="1">FGAM synthase</shortName>
        <ecNumber evidence="1">6.3.5.3</ecNumber>
    </recommendedName>
    <alternativeName>
        <fullName evidence="1">Formylglycinamide ribonucleotide amidotransferase subunit I</fullName>
        <shortName evidence="1">FGAR amidotransferase I</shortName>
        <shortName evidence="1">FGAR-AT I</shortName>
    </alternativeName>
    <alternativeName>
        <fullName evidence="1">Glutaminase PurQ</fullName>
        <ecNumber evidence="1">3.5.1.2</ecNumber>
    </alternativeName>
    <alternativeName>
        <fullName evidence="1">Phosphoribosylformylglycinamidine synthase subunit I</fullName>
    </alternativeName>
</protein>
<gene>
    <name evidence="1" type="primary">purQ</name>
    <name type="ordered locus">SE_0766</name>
</gene>
<reference key="1">
    <citation type="journal article" date="2003" name="Mol. Microbiol.">
        <title>Genome-based analysis of virulence genes in a non-biofilm-forming Staphylococcus epidermidis strain (ATCC 12228).</title>
        <authorList>
            <person name="Zhang Y.-Q."/>
            <person name="Ren S.-X."/>
            <person name="Li H.-L."/>
            <person name="Wang Y.-X."/>
            <person name="Fu G."/>
            <person name="Yang J."/>
            <person name="Qin Z.-Q."/>
            <person name="Miao Y.-G."/>
            <person name="Wang W.-Y."/>
            <person name="Chen R.-S."/>
            <person name="Shen Y."/>
            <person name="Chen Z."/>
            <person name="Yuan Z.-H."/>
            <person name="Zhao G.-P."/>
            <person name="Qu D."/>
            <person name="Danchin A."/>
            <person name="Wen Y.-M."/>
        </authorList>
    </citation>
    <scope>NUCLEOTIDE SEQUENCE [LARGE SCALE GENOMIC DNA]</scope>
    <source>
        <strain>ATCC 12228 / FDA PCI 1200</strain>
    </source>
</reference>
<feature type="chain" id="PRO_0000100589" description="Phosphoribosylformylglycinamidine synthase subunit PurQ">
    <location>
        <begin position="1"/>
        <end position="223"/>
    </location>
</feature>
<feature type="domain" description="Glutamine amidotransferase type-1" evidence="1">
    <location>
        <begin position="3"/>
        <end position="223"/>
    </location>
</feature>
<feature type="active site" description="Nucleophile" evidence="1">
    <location>
        <position position="85"/>
    </location>
</feature>
<feature type="active site" evidence="1">
    <location>
        <position position="193"/>
    </location>
</feature>
<feature type="active site" evidence="1">
    <location>
        <position position="195"/>
    </location>
</feature>